<protein>
    <recommendedName>
        <fullName>Transcriptional activator protein</fullName>
        <shortName>TrAP</shortName>
    </recommendedName>
    <alternativeName>
        <fullName>Protein C2</fullName>
    </alternativeName>
    <alternativeName>
        <fullName>Protein L2</fullName>
    </alternativeName>
</protein>
<name>TRAP_TYCSV</name>
<organismHost>
    <name type="scientific">Capsicum annuum</name>
    <name type="common">Capsicum pepper</name>
    <dbReference type="NCBI Taxonomy" id="4072"/>
</organismHost>
<organismHost>
    <name type="scientific">Cynanchum acutum</name>
    <dbReference type="NCBI Taxonomy" id="185024"/>
</organismHost>
<organismHost>
    <name type="scientific">Malva parviflora</name>
    <name type="common">Little mallow</name>
    <name type="synonym">Cheeseweed mallow</name>
    <dbReference type="NCBI Taxonomy" id="145753"/>
</organismHost>
<organismHost>
    <name type="scientific">Sinapis arvensis</name>
    <dbReference type="NCBI Taxonomy" id="29728"/>
</organismHost>
<organismHost>
    <name type="scientific">Solanum lycopersicum</name>
    <name type="common">Tomato</name>
    <name type="synonym">Lycopersicon esculentum</name>
    <dbReference type="NCBI Taxonomy" id="4081"/>
</organismHost>
<organismHost>
    <name type="scientific">Solanum nigrum</name>
    <name type="common">Black nightshade</name>
    <dbReference type="NCBI Taxonomy" id="4112"/>
</organismHost>
<keyword id="KW-0010">Activator</keyword>
<keyword id="KW-0238">DNA-binding</keyword>
<keyword id="KW-1035">Host cytoplasm</keyword>
<keyword id="KW-1048">Host nucleus</keyword>
<keyword id="KW-0945">Host-virus interaction</keyword>
<keyword id="KW-1090">Inhibition of host innate immune response by virus</keyword>
<keyword id="KW-0479">Metal-binding</keyword>
<keyword id="KW-0597">Phosphoprotein</keyword>
<keyword id="KW-1185">Reference proteome</keyword>
<keyword id="KW-0941">Suppressor of RNA silencing</keyword>
<keyword id="KW-0899">Viral immunoevasion</keyword>
<keyword id="KW-0862">Zinc</keyword>
<keyword id="KW-0863">Zinc-finger</keyword>
<proteinExistence type="inferred from homology"/>
<reference key="1">
    <citation type="journal article" date="1991" name="Nucleic Acids Res.">
        <title>Tomato yellow leaf curl virus from Sardinia is a whitefly-transmitted monopartite geminivirus.</title>
        <authorList>
            <person name="Kheyr-Pour A."/>
            <person name="Bendahmane M."/>
            <person name="Matzeit V."/>
            <person name="Accotto G.P."/>
            <person name="Crespi S."/>
            <person name="Gronenborn B."/>
        </authorList>
    </citation>
    <scope>NUCLEOTIDE SEQUENCE [GENOMIC DNA]</scope>
</reference>
<feature type="chain" id="PRO_0000222234" description="Transcriptional activator protein">
    <location>
        <begin position="1"/>
        <end position="135"/>
    </location>
</feature>
<feature type="zinc finger region" evidence="1">
    <location>
        <begin position="37"/>
        <end position="54"/>
    </location>
</feature>
<feature type="region of interest" description="Transactivation" evidence="1">
    <location>
        <begin position="120"/>
        <end position="135"/>
    </location>
</feature>
<feature type="short sequence motif" description="Nuclear localization signal" evidence="1">
    <location>
        <begin position="17"/>
        <end position="32"/>
    </location>
</feature>
<evidence type="ECO:0000250" key="1"/>
<evidence type="ECO:0000250" key="2">
    <source>
        <dbReference type="UniProtKB" id="P27262"/>
    </source>
</evidence>
<evidence type="ECO:0000250" key="3">
    <source>
        <dbReference type="UniProtKB" id="Q91J26"/>
    </source>
</evidence>
<evidence type="ECO:0000250" key="4">
    <source>
        <dbReference type="UniProtKB" id="Q9DXE6"/>
    </source>
</evidence>
<evidence type="ECO:0000305" key="5"/>
<dbReference type="EMBL" id="X61153">
    <property type="protein sequence ID" value="CAA43464.1"/>
    <property type="molecule type" value="Genomic_DNA"/>
</dbReference>
<dbReference type="PIR" id="S22591">
    <property type="entry name" value="S22591"/>
</dbReference>
<dbReference type="RefSeq" id="NP_620740.1">
    <property type="nucleotide sequence ID" value="NC_003828.1"/>
</dbReference>
<dbReference type="SMR" id="P27263"/>
<dbReference type="GeneID" id="944424"/>
<dbReference type="KEGG" id="vg:944424"/>
<dbReference type="OrthoDB" id="11041at10239"/>
<dbReference type="Proteomes" id="UP000002323">
    <property type="component" value="Genome"/>
</dbReference>
<dbReference type="GO" id="GO:0030430">
    <property type="term" value="C:host cell cytoplasm"/>
    <property type="evidence" value="ECO:0007669"/>
    <property type="project" value="UniProtKB-SubCell"/>
</dbReference>
<dbReference type="GO" id="GO:0042025">
    <property type="term" value="C:host cell nucleus"/>
    <property type="evidence" value="ECO:0007669"/>
    <property type="project" value="UniProtKB-SubCell"/>
</dbReference>
<dbReference type="GO" id="GO:0019028">
    <property type="term" value="C:viral capsid"/>
    <property type="evidence" value="ECO:0007669"/>
    <property type="project" value="InterPro"/>
</dbReference>
<dbReference type="GO" id="GO:0003677">
    <property type="term" value="F:DNA binding"/>
    <property type="evidence" value="ECO:0007669"/>
    <property type="project" value="UniProtKB-KW"/>
</dbReference>
<dbReference type="GO" id="GO:0005198">
    <property type="term" value="F:structural molecule activity"/>
    <property type="evidence" value="ECO:0007669"/>
    <property type="project" value="InterPro"/>
</dbReference>
<dbReference type="GO" id="GO:0008270">
    <property type="term" value="F:zinc ion binding"/>
    <property type="evidence" value="ECO:0007669"/>
    <property type="project" value="UniProtKB-KW"/>
</dbReference>
<dbReference type="GO" id="GO:0052170">
    <property type="term" value="P:symbiont-mediated suppression of host innate immune response"/>
    <property type="evidence" value="ECO:0007669"/>
    <property type="project" value="UniProtKB-KW"/>
</dbReference>
<dbReference type="InterPro" id="IPR000942">
    <property type="entry name" value="Gemini_AL2"/>
</dbReference>
<dbReference type="Pfam" id="PF01440">
    <property type="entry name" value="Gemini_AL2"/>
    <property type="match status" value="1"/>
</dbReference>
<dbReference type="PRINTS" id="PR00230">
    <property type="entry name" value="GEMCOATAL2"/>
</dbReference>
<sequence>MQSSSPSTSHCSQIPIKIQHHIAKKRQVRRRRVDLDCGCSYYIHLDCINHGFTHRGVHHCASSNEWRLYLRDNKSPIFHDNQTQSEPIQQQIQHTNIPNQIQPQLEEGTGDSQMFSQLPHLDDLTVSDWSFFKSL</sequence>
<accession>P27263</accession>
<comment type="function">
    <text evidence="3">Multifunctional protein that modulates host antiviral defenses and promotes host attractiveness to insect vectors. Acts as a suppressor of RNA-mediated gene silencing, also known as post-transcriptional gene silencing (PTGS), a mechanism of plant viral defense that limits the accumulation of viral RNAs. TrAP suppresses the host RNA silencing by inhibiting adenosine kinase 2 (ADK2), a kinase involved in a general methylation pathway. Also suppresses the host basal defense by interacting with and inhibiting SNF1 kinase, a key regulator of cell metabolism implicated in innate antiviral defense.</text>
</comment>
<comment type="function">
    <text evidence="2">Inhibits signal transduction by the phytohormone jasmonate, making the infected plant more attractive to aphids, which are the second host to play a role as a dissemination vector. Acts by binding to ubiquitin precursor RPS27A, thereby preventing ubiquitin degradation of JAZ.</text>
</comment>
<comment type="subunit">
    <text evidence="3">Monomer. Homodimer. Homooligomer. Self-interaction correlates with nuclear localization and efficient activation of transcription. Monomers suppress local silencing by interacting with and inactivating host adenosine kinase 2 (ADK2) in the cytoplasm. Interacts with and inhibits host SNF1 kinase. Binds to ssDNA. May interact with host RPS27A.</text>
</comment>
<comment type="subcellular location">
    <subcellularLocation>
        <location evidence="3">Host nucleus</location>
    </subcellularLocation>
    <subcellularLocation>
        <location evidence="3">Host cytoplasm</location>
    </subcellularLocation>
    <text evidence="3">The phosphorylated form appears to accumulate almost exclusively in the nucleus, whereas the non-phosphorylated form is found in both nucleus and cytoplasm.</text>
</comment>
<comment type="domain">
    <text evidence="4">The zinc finger and the transactivation region are involved in PTGS suppression.</text>
</comment>
<comment type="PTM">
    <text evidence="3">Phosphorylated.</text>
</comment>
<comment type="similarity">
    <text evidence="5">Belongs to the geminiviridae transcriptional activator protein family.</text>
</comment>
<gene>
    <name type="ORF">C2</name>
    <name type="ORF">L2</name>
</gene>
<organism>
    <name type="scientific">Tomato yellow leaf curl Sardinia virus</name>
    <name type="common">TYLCSV</name>
    <dbReference type="NCBI Taxonomy" id="123735"/>
    <lineage>
        <taxon>Viruses</taxon>
        <taxon>Monodnaviria</taxon>
        <taxon>Shotokuvirae</taxon>
        <taxon>Cressdnaviricota</taxon>
        <taxon>Repensiviricetes</taxon>
        <taxon>Geplafuvirales</taxon>
        <taxon>Geminiviridae</taxon>
        <taxon>Begomovirus</taxon>
    </lineage>
</organism>